<name>COAD_CORGL</name>
<organism>
    <name type="scientific">Corynebacterium glutamicum (strain ATCC 13032 / DSM 20300 / JCM 1318 / BCRC 11384 / CCUG 27702 / LMG 3730 / NBRC 12168 / NCIMB 10025 / NRRL B-2784 / 534)</name>
    <dbReference type="NCBI Taxonomy" id="196627"/>
    <lineage>
        <taxon>Bacteria</taxon>
        <taxon>Bacillati</taxon>
        <taxon>Actinomycetota</taxon>
        <taxon>Actinomycetes</taxon>
        <taxon>Mycobacteriales</taxon>
        <taxon>Corynebacteriaceae</taxon>
        <taxon>Corynebacterium</taxon>
    </lineage>
</organism>
<evidence type="ECO:0000255" key="1">
    <source>
        <dbReference type="HAMAP-Rule" id="MF_00151"/>
    </source>
</evidence>
<proteinExistence type="inferred from homology"/>
<comment type="function">
    <text evidence="1">Reversibly transfers an adenylyl group from ATP to 4'-phosphopantetheine, yielding dephospho-CoA (dPCoA) and pyrophosphate.</text>
</comment>
<comment type="catalytic activity">
    <reaction evidence="1">
        <text>(R)-4'-phosphopantetheine + ATP + H(+) = 3'-dephospho-CoA + diphosphate</text>
        <dbReference type="Rhea" id="RHEA:19801"/>
        <dbReference type="ChEBI" id="CHEBI:15378"/>
        <dbReference type="ChEBI" id="CHEBI:30616"/>
        <dbReference type="ChEBI" id="CHEBI:33019"/>
        <dbReference type="ChEBI" id="CHEBI:57328"/>
        <dbReference type="ChEBI" id="CHEBI:61723"/>
        <dbReference type="EC" id="2.7.7.3"/>
    </reaction>
</comment>
<comment type="cofactor">
    <cofactor evidence="1">
        <name>Mg(2+)</name>
        <dbReference type="ChEBI" id="CHEBI:18420"/>
    </cofactor>
</comment>
<comment type="pathway">
    <text evidence="1">Cofactor biosynthesis; coenzyme A biosynthesis; CoA from (R)-pantothenate: step 4/5.</text>
</comment>
<comment type="subunit">
    <text evidence="1">Homohexamer.</text>
</comment>
<comment type="subcellular location">
    <subcellularLocation>
        <location evidence="1">Cytoplasm</location>
    </subcellularLocation>
</comment>
<comment type="similarity">
    <text evidence="1">Belongs to the bacterial CoaD family.</text>
</comment>
<keyword id="KW-0067">ATP-binding</keyword>
<keyword id="KW-0173">Coenzyme A biosynthesis</keyword>
<keyword id="KW-0963">Cytoplasm</keyword>
<keyword id="KW-0460">Magnesium</keyword>
<keyword id="KW-0547">Nucleotide-binding</keyword>
<keyword id="KW-0548">Nucleotidyltransferase</keyword>
<keyword id="KW-1185">Reference proteome</keyword>
<keyword id="KW-0808">Transferase</keyword>
<reference key="1">
    <citation type="journal article" date="2003" name="Appl. Microbiol. Biotechnol.">
        <title>The Corynebacterium glutamicum genome: features and impacts on biotechnological processes.</title>
        <authorList>
            <person name="Ikeda M."/>
            <person name="Nakagawa S."/>
        </authorList>
    </citation>
    <scope>NUCLEOTIDE SEQUENCE [LARGE SCALE GENOMIC DNA]</scope>
    <source>
        <strain>ATCC 13032 / DSM 20300 / JCM 1318 / BCRC 11384 / CCUG 27702 / LMG 3730 / NBRC 12168 / NCIMB 10025 / NRRL B-2784 / 534</strain>
    </source>
</reference>
<reference key="2">
    <citation type="journal article" date="2003" name="J. Biotechnol.">
        <title>The complete Corynebacterium glutamicum ATCC 13032 genome sequence and its impact on the production of L-aspartate-derived amino acids and vitamins.</title>
        <authorList>
            <person name="Kalinowski J."/>
            <person name="Bathe B."/>
            <person name="Bartels D."/>
            <person name="Bischoff N."/>
            <person name="Bott M."/>
            <person name="Burkovski A."/>
            <person name="Dusch N."/>
            <person name="Eggeling L."/>
            <person name="Eikmanns B.J."/>
            <person name="Gaigalat L."/>
            <person name="Goesmann A."/>
            <person name="Hartmann M."/>
            <person name="Huthmacher K."/>
            <person name="Kraemer R."/>
            <person name="Linke B."/>
            <person name="McHardy A.C."/>
            <person name="Meyer F."/>
            <person name="Moeckel B."/>
            <person name="Pfefferle W."/>
            <person name="Puehler A."/>
            <person name="Rey D.A."/>
            <person name="Rueckert C."/>
            <person name="Rupp O."/>
            <person name="Sahm H."/>
            <person name="Wendisch V.F."/>
            <person name="Wiegraebe I."/>
            <person name="Tauch A."/>
        </authorList>
    </citation>
    <scope>NUCLEOTIDE SEQUENCE [LARGE SCALE GENOMIC DNA]</scope>
    <source>
        <strain>ATCC 13032 / DSM 20300 / JCM 1318 / BCRC 11384 / CCUG 27702 / LMG 3730 / NBRC 12168 / NCIMB 10025 / NRRL B-2784 / 534</strain>
    </source>
</reference>
<protein>
    <recommendedName>
        <fullName evidence="1">Phosphopantetheine adenylyltransferase</fullName>
        <ecNumber evidence="1">2.7.7.3</ecNumber>
    </recommendedName>
    <alternativeName>
        <fullName evidence="1">Dephospho-CoA pyrophosphorylase</fullName>
    </alternativeName>
    <alternativeName>
        <fullName evidence="1">Pantetheine-phosphate adenylyltransferase</fullName>
        <shortName evidence="1">PPAT</shortName>
    </alternativeName>
</protein>
<accession>Q8NQU5</accession>
<feature type="chain" id="PRO_0000156199" description="Phosphopantetheine adenylyltransferase">
    <location>
        <begin position="1"/>
        <end position="160"/>
    </location>
</feature>
<feature type="binding site" evidence="1">
    <location>
        <begin position="8"/>
        <end position="9"/>
    </location>
    <ligand>
        <name>ATP</name>
        <dbReference type="ChEBI" id="CHEBI:30616"/>
    </ligand>
</feature>
<feature type="binding site" evidence="1">
    <location>
        <position position="8"/>
    </location>
    <ligand>
        <name>substrate</name>
    </ligand>
</feature>
<feature type="binding site" evidence="1">
    <location>
        <position position="16"/>
    </location>
    <ligand>
        <name>ATP</name>
        <dbReference type="ChEBI" id="CHEBI:30616"/>
    </ligand>
</feature>
<feature type="binding site" evidence="1">
    <location>
        <position position="40"/>
    </location>
    <ligand>
        <name>substrate</name>
    </ligand>
</feature>
<feature type="binding site" evidence="1">
    <location>
        <position position="73"/>
    </location>
    <ligand>
        <name>substrate</name>
    </ligand>
</feature>
<feature type="binding site" evidence="1">
    <location>
        <position position="87"/>
    </location>
    <ligand>
        <name>substrate</name>
    </ligand>
</feature>
<feature type="binding site" evidence="1">
    <location>
        <begin position="88"/>
        <end position="90"/>
    </location>
    <ligand>
        <name>ATP</name>
        <dbReference type="ChEBI" id="CHEBI:30616"/>
    </ligand>
</feature>
<feature type="binding site" evidence="1">
    <location>
        <position position="98"/>
    </location>
    <ligand>
        <name>ATP</name>
        <dbReference type="ChEBI" id="CHEBI:30616"/>
    </ligand>
</feature>
<feature type="binding site" evidence="1">
    <location>
        <begin position="122"/>
        <end position="128"/>
    </location>
    <ligand>
        <name>ATP</name>
        <dbReference type="ChEBI" id="CHEBI:30616"/>
    </ligand>
</feature>
<feature type="site" description="Transition state stabilizer" evidence="1">
    <location>
        <position position="16"/>
    </location>
</feature>
<gene>
    <name evidence="1" type="primary">coaD</name>
    <name type="ordered locus">Cgl1329</name>
    <name type="ordered locus">cg1501</name>
</gene>
<dbReference type="EC" id="2.7.7.3" evidence="1"/>
<dbReference type="EMBL" id="BA000036">
    <property type="protein sequence ID" value="BAB98722.1"/>
    <property type="molecule type" value="Genomic_DNA"/>
</dbReference>
<dbReference type="EMBL" id="BX927151">
    <property type="protein sequence ID" value="CAF20027.1"/>
    <property type="molecule type" value="Genomic_DNA"/>
</dbReference>
<dbReference type="RefSeq" id="NP_600549.1">
    <property type="nucleotide sequence ID" value="NC_003450.3"/>
</dbReference>
<dbReference type="RefSeq" id="WP_003858828.1">
    <property type="nucleotide sequence ID" value="NC_006958.1"/>
</dbReference>
<dbReference type="SMR" id="Q8NQU5"/>
<dbReference type="STRING" id="196627.cg1501"/>
<dbReference type="GeneID" id="1019305"/>
<dbReference type="KEGG" id="cgb:cg1501"/>
<dbReference type="KEGG" id="cgl:Cgl1329"/>
<dbReference type="PATRIC" id="fig|196627.13.peg.1299"/>
<dbReference type="eggNOG" id="COG0669">
    <property type="taxonomic scope" value="Bacteria"/>
</dbReference>
<dbReference type="HOGENOM" id="CLU_100149_1_0_11"/>
<dbReference type="OrthoDB" id="9806661at2"/>
<dbReference type="BioCyc" id="CORYNE:G18NG-10907-MONOMER"/>
<dbReference type="UniPathway" id="UPA00241">
    <property type="reaction ID" value="UER00355"/>
</dbReference>
<dbReference type="Proteomes" id="UP000000582">
    <property type="component" value="Chromosome"/>
</dbReference>
<dbReference type="Proteomes" id="UP000001009">
    <property type="component" value="Chromosome"/>
</dbReference>
<dbReference type="GO" id="GO:0005737">
    <property type="term" value="C:cytoplasm"/>
    <property type="evidence" value="ECO:0007669"/>
    <property type="project" value="UniProtKB-SubCell"/>
</dbReference>
<dbReference type="GO" id="GO:0005524">
    <property type="term" value="F:ATP binding"/>
    <property type="evidence" value="ECO:0007669"/>
    <property type="project" value="UniProtKB-KW"/>
</dbReference>
<dbReference type="GO" id="GO:0004595">
    <property type="term" value="F:pantetheine-phosphate adenylyltransferase activity"/>
    <property type="evidence" value="ECO:0007669"/>
    <property type="project" value="UniProtKB-UniRule"/>
</dbReference>
<dbReference type="GO" id="GO:0015937">
    <property type="term" value="P:coenzyme A biosynthetic process"/>
    <property type="evidence" value="ECO:0007669"/>
    <property type="project" value="UniProtKB-UniRule"/>
</dbReference>
<dbReference type="CDD" id="cd02163">
    <property type="entry name" value="PPAT"/>
    <property type="match status" value="1"/>
</dbReference>
<dbReference type="Gene3D" id="3.40.50.620">
    <property type="entry name" value="HUPs"/>
    <property type="match status" value="1"/>
</dbReference>
<dbReference type="HAMAP" id="MF_00151">
    <property type="entry name" value="PPAT_bact"/>
    <property type="match status" value="1"/>
</dbReference>
<dbReference type="InterPro" id="IPR004821">
    <property type="entry name" value="Cyt_trans-like"/>
</dbReference>
<dbReference type="InterPro" id="IPR001980">
    <property type="entry name" value="PPAT"/>
</dbReference>
<dbReference type="InterPro" id="IPR014729">
    <property type="entry name" value="Rossmann-like_a/b/a_fold"/>
</dbReference>
<dbReference type="NCBIfam" id="TIGR01510">
    <property type="entry name" value="coaD_prev_kdtB"/>
    <property type="match status" value="1"/>
</dbReference>
<dbReference type="NCBIfam" id="TIGR00125">
    <property type="entry name" value="cyt_tran_rel"/>
    <property type="match status" value="1"/>
</dbReference>
<dbReference type="PANTHER" id="PTHR21342">
    <property type="entry name" value="PHOSPHOPANTETHEINE ADENYLYLTRANSFERASE"/>
    <property type="match status" value="1"/>
</dbReference>
<dbReference type="PANTHER" id="PTHR21342:SF1">
    <property type="entry name" value="PHOSPHOPANTETHEINE ADENYLYLTRANSFERASE"/>
    <property type="match status" value="1"/>
</dbReference>
<dbReference type="Pfam" id="PF01467">
    <property type="entry name" value="CTP_transf_like"/>
    <property type="match status" value="1"/>
</dbReference>
<dbReference type="PRINTS" id="PR01020">
    <property type="entry name" value="LPSBIOSNTHSS"/>
</dbReference>
<dbReference type="SUPFAM" id="SSF52374">
    <property type="entry name" value="Nucleotidylyl transferase"/>
    <property type="match status" value="1"/>
</dbReference>
<sequence length="160" mass="17575">MKAVCPGSFDPITLGHLDIVTRAAAQFSEVTILVTANPNKNSGLFTVAERMDLIRESTAHLDNVKVDTWASLLVDYTTEHGIGALVKGLRSSLDYEYELPMAQMNRRLTGVDTFFLLTDEKYGYVSSTLCKEVARFGGDVSGLLPEVVAKAVTEKYSNQH</sequence>